<proteinExistence type="evidence at protein level"/>
<name>NHAB_PSEAE</name>
<gene>
    <name evidence="1 3" type="primary">nhaB</name>
    <name type="ordered locus">PA1820</name>
</gene>
<sequence length="500" mass="54234">MSSPLSQAFAQNFLGHSPRWYKLTVLAFLLLNPLLLWLAGPVTSAWVLVGEFIFTLAMALKCYPLQPGGLLVLEALLLGLATPEALYAELQHNFPVLLLLMFMVAGIYFMKDLLLLLFSRLLLGVRSKTLLSLLFCLLAALLSAFLDALTVTAVVISVAVAFFAVYHRVASGQRASEDYDPATDRQVPELHRAHLEEFRAFLRSLLMHAAVGTALGGVCTLVGEPQNLLIGHEAGWHFVEFFRQVAPVSMPVLAAGLLTCVLLEKSRRFGYGAQLPAAVRQVLAEYAASESRKRGAQQKAALLVQALAALVLIVGLALHVAEVGLIGLLVIVLITAFTGVTDEHQIGRAFQEALPFTALLVVFFAVVAVIHQQHLFTPIIQAVLALPAERQPGMLFIANGLLSAISDNVFVATIYITEVKQALDAGHMSREHFDTLAVAINTGTNLPSVATPNGQAAFLFLLTSSIAPLVRLSYGRMVWMALPYTLVMGGLGWWAVSHWL</sequence>
<protein>
    <recommendedName>
        <fullName evidence="1">Na(+)/H(+) antiporter NhaB</fullName>
    </recommendedName>
    <alternativeName>
        <fullName evidence="1">Sodium/proton antiporter NhaB</fullName>
    </alternativeName>
</protein>
<reference key="1">
    <citation type="journal article" date="2004" name="Microbiol. Immunol.">
        <title>A major Li(+) extrusion system NhaB of Pseudomonas aeruginosa: comparison with the major Na(+) extrusion system NhaP.</title>
        <authorList>
            <person name="Kuroda T."/>
            <person name="Fujita N."/>
            <person name="Utsugi J."/>
            <person name="Kuroda M."/>
            <person name="Mizushima T."/>
            <person name="Tsuchiya T."/>
        </authorList>
    </citation>
    <scope>NUCLEOTIDE SEQUENCE [GENOMIC DNA]</scope>
    <scope>FUNCTION</scope>
    <scope>ACTIVITY REGULATION</scope>
    <scope>BIOPHYSICOCHEMICAL PROPERTIES</scope>
    <source>
        <strain>ATCC 15692 / DSM 22644 / CIP 104116 / JCM 14847 / LMG 12228 / 1C / PRS 101 / PAO1</strain>
    </source>
</reference>
<reference key="2">
    <citation type="journal article" date="2000" name="Nature">
        <title>Complete genome sequence of Pseudomonas aeruginosa PAO1, an opportunistic pathogen.</title>
        <authorList>
            <person name="Stover C.K."/>
            <person name="Pham X.-Q.T."/>
            <person name="Erwin A.L."/>
            <person name="Mizoguchi S.D."/>
            <person name="Warrener P."/>
            <person name="Hickey M.J."/>
            <person name="Brinkman F.S.L."/>
            <person name="Hufnagle W.O."/>
            <person name="Kowalik D.J."/>
            <person name="Lagrou M."/>
            <person name="Garber R.L."/>
            <person name="Goltry L."/>
            <person name="Tolentino E."/>
            <person name="Westbrock-Wadman S."/>
            <person name="Yuan Y."/>
            <person name="Brody L.L."/>
            <person name="Coulter S.N."/>
            <person name="Folger K.R."/>
            <person name="Kas A."/>
            <person name="Larbig K."/>
            <person name="Lim R.M."/>
            <person name="Smith K.A."/>
            <person name="Spencer D.H."/>
            <person name="Wong G.K.-S."/>
            <person name="Wu Z."/>
            <person name="Paulsen I.T."/>
            <person name="Reizer J."/>
            <person name="Saier M.H. Jr."/>
            <person name="Hancock R.E.W."/>
            <person name="Lory S."/>
            <person name="Olson M.V."/>
        </authorList>
    </citation>
    <scope>NUCLEOTIDE SEQUENCE [LARGE SCALE GENOMIC DNA]</scope>
    <source>
        <strain>ATCC 15692 / DSM 22644 / CIP 104116 / JCM 14847 / LMG 12228 / 1C / PRS 101 / PAO1</strain>
    </source>
</reference>
<accession>Q9I2S5</accession>
<accession>Q9KWF4</accession>
<organism>
    <name type="scientific">Pseudomonas aeruginosa (strain ATCC 15692 / DSM 22644 / CIP 104116 / JCM 14847 / LMG 12228 / 1C / PRS 101 / PAO1)</name>
    <dbReference type="NCBI Taxonomy" id="208964"/>
    <lineage>
        <taxon>Bacteria</taxon>
        <taxon>Pseudomonadati</taxon>
        <taxon>Pseudomonadota</taxon>
        <taxon>Gammaproteobacteria</taxon>
        <taxon>Pseudomonadales</taxon>
        <taxon>Pseudomonadaceae</taxon>
        <taxon>Pseudomonas</taxon>
    </lineage>
</organism>
<feature type="chain" id="PRO_0000333106" description="Na(+)/H(+) antiporter NhaB">
    <location>
        <begin position="1"/>
        <end position="500"/>
    </location>
</feature>
<feature type="transmembrane region" description="Helical" evidence="1">
    <location>
        <begin position="28"/>
        <end position="50"/>
    </location>
</feature>
<feature type="transmembrane region" description="Helical" evidence="1">
    <location>
        <begin position="68"/>
        <end position="88"/>
    </location>
</feature>
<feature type="transmembrane region" description="Helical" evidence="1">
    <location>
        <begin position="98"/>
        <end position="118"/>
    </location>
</feature>
<feature type="transmembrane region" description="Helical" evidence="1">
    <location>
        <begin position="121"/>
        <end position="141"/>
    </location>
</feature>
<feature type="transmembrane region" description="Helical" evidence="1">
    <location>
        <begin position="145"/>
        <end position="165"/>
    </location>
</feature>
<feature type="transmembrane region" description="Helical" evidence="1">
    <location>
        <begin position="205"/>
        <end position="225"/>
    </location>
</feature>
<feature type="transmembrane region" description="Helical" evidence="1">
    <location>
        <begin position="244"/>
        <end position="264"/>
    </location>
</feature>
<feature type="transmembrane region" description="Helical" evidence="1">
    <location>
        <begin position="311"/>
        <end position="331"/>
    </location>
</feature>
<feature type="transmembrane region" description="Helical" evidence="1">
    <location>
        <begin position="350"/>
        <end position="370"/>
    </location>
</feature>
<feature type="transmembrane region" description="Helical" evidence="1">
    <location>
        <begin position="394"/>
        <end position="414"/>
    </location>
</feature>
<feature type="transmembrane region" description="Helical" evidence="1">
    <location>
        <begin position="449"/>
        <end position="469"/>
    </location>
</feature>
<feature type="transmembrane region" description="Helical" evidence="1">
    <location>
        <begin position="477"/>
        <end position="497"/>
    </location>
</feature>
<feature type="sequence conflict" description="In Ref. 1; BAB07876." evidence="4" ref="1">
    <original>R</original>
    <variation>H</variation>
    <location>
        <position position="390"/>
    </location>
</feature>
<keyword id="KW-0050">Antiport</keyword>
<keyword id="KW-0997">Cell inner membrane</keyword>
<keyword id="KW-1003">Cell membrane</keyword>
<keyword id="KW-0406">Ion transport</keyword>
<keyword id="KW-0472">Membrane</keyword>
<keyword id="KW-1185">Reference proteome</keyword>
<keyword id="KW-0915">Sodium</keyword>
<keyword id="KW-0739">Sodium transport</keyword>
<keyword id="KW-0812">Transmembrane</keyword>
<keyword id="KW-1133">Transmembrane helix</keyword>
<keyword id="KW-0813">Transport</keyword>
<evidence type="ECO:0000255" key="1">
    <source>
        <dbReference type="HAMAP-Rule" id="MF_01599"/>
    </source>
</evidence>
<evidence type="ECO:0000269" key="2">
    <source>
    </source>
</evidence>
<evidence type="ECO:0000303" key="3">
    <source>
    </source>
</evidence>
<evidence type="ECO:0000305" key="4"/>
<comment type="function">
    <text evidence="2">Na(+)/H(+) antiporter that extrudes sodium in exchange for external protons (PubMed:15107534). Can also transport lithium (PubMed:15107534).</text>
</comment>
<comment type="catalytic activity">
    <reaction evidence="1">
        <text>2 Na(+)(in) + 3 H(+)(out) = 2 Na(+)(out) + 3 H(+)(in)</text>
        <dbReference type="Rhea" id="RHEA:29247"/>
        <dbReference type="ChEBI" id="CHEBI:15378"/>
        <dbReference type="ChEBI" id="CHEBI:29101"/>
    </reaction>
    <physiologicalReaction direction="left-to-right" evidence="1">
        <dbReference type="Rhea" id="RHEA:29248"/>
    </physiologicalReaction>
</comment>
<comment type="activity regulation">
    <text evidence="2">Inhibited by amiloride.</text>
</comment>
<comment type="biophysicochemical properties">
    <kinetics>
        <KM evidence="2">1.3 mM for Na(+) (in the absence of amiloride, at pH 8.0)</KM>
        <KM evidence="2">2 mM for Li(+) (in the absence of amiloride, at pH 8.0)</KM>
        <KM evidence="2">12.5 mM for Na(+) (in the presence of 0.2 mM amiloride, at pH 8.0)</KM>
        <KM evidence="2">21 mM for Li(+) (in the presence of 0.2 mM amiloride, at pH 8.0)</KM>
    </kinetics>
    <phDependence>
        <text evidence="2">Optimum pH is 7.5-8.5. Activity decreases sharply below pH 7.0 and is null at pH 6.5.</text>
    </phDependence>
</comment>
<comment type="subcellular location">
    <subcellularLocation>
        <location evidence="1">Cell inner membrane</location>
        <topology evidence="1">Multi-pass membrane protein</topology>
    </subcellularLocation>
</comment>
<comment type="similarity">
    <text evidence="1 4">Belongs to the NhaB Na(+)/H(+) (TC 2.A.34) antiporter family.</text>
</comment>
<dbReference type="EMBL" id="AB037930">
    <property type="protein sequence ID" value="BAB07876.2"/>
    <property type="molecule type" value="Genomic_DNA"/>
</dbReference>
<dbReference type="EMBL" id="AE004091">
    <property type="protein sequence ID" value="AAG05209.1"/>
    <property type="molecule type" value="Genomic_DNA"/>
</dbReference>
<dbReference type="PIR" id="F83418">
    <property type="entry name" value="F83418"/>
</dbReference>
<dbReference type="RefSeq" id="NP_250511.1">
    <property type="nucleotide sequence ID" value="NC_002516.2"/>
</dbReference>
<dbReference type="RefSeq" id="WP_003113594.1">
    <property type="nucleotide sequence ID" value="NZ_QZGE01000003.1"/>
</dbReference>
<dbReference type="SMR" id="Q9I2S5"/>
<dbReference type="FunCoup" id="Q9I2S5">
    <property type="interactions" value="25"/>
</dbReference>
<dbReference type="STRING" id="208964.PA1820"/>
<dbReference type="TCDB" id="2.A.34.1.3">
    <property type="family name" value="the nhab na(+):h(+) antiporter (nhab) family"/>
</dbReference>
<dbReference type="PaxDb" id="208964-PA1820"/>
<dbReference type="GeneID" id="877826"/>
<dbReference type="KEGG" id="pae:PA1820"/>
<dbReference type="PATRIC" id="fig|208964.12.peg.1890"/>
<dbReference type="PseudoCAP" id="PA1820"/>
<dbReference type="HOGENOM" id="CLU_041110_0_0_6"/>
<dbReference type="InParanoid" id="Q9I2S5"/>
<dbReference type="OrthoDB" id="5288732at2"/>
<dbReference type="PhylomeDB" id="Q9I2S5"/>
<dbReference type="BioCyc" id="PAER208964:G1FZ6-1858-MONOMER"/>
<dbReference type="Proteomes" id="UP000002438">
    <property type="component" value="Chromosome"/>
</dbReference>
<dbReference type="GO" id="GO:0005886">
    <property type="term" value="C:plasma membrane"/>
    <property type="evidence" value="ECO:0000318"/>
    <property type="project" value="GO_Central"/>
</dbReference>
<dbReference type="GO" id="GO:0015385">
    <property type="term" value="F:sodium:proton antiporter activity"/>
    <property type="evidence" value="ECO:0000318"/>
    <property type="project" value="GO_Central"/>
</dbReference>
<dbReference type="HAMAP" id="MF_01599">
    <property type="entry name" value="NhaB"/>
    <property type="match status" value="1"/>
</dbReference>
<dbReference type="InterPro" id="IPR004671">
    <property type="entry name" value="Na+/H+_antiporter_NhaB"/>
</dbReference>
<dbReference type="NCBIfam" id="NF007093">
    <property type="entry name" value="PRK09547.1"/>
    <property type="match status" value="1"/>
</dbReference>
<dbReference type="PANTHER" id="PTHR43302:SF1">
    <property type="entry name" value="NA(+)_H(+) ANTIPORTER NHAB"/>
    <property type="match status" value="1"/>
</dbReference>
<dbReference type="PANTHER" id="PTHR43302">
    <property type="entry name" value="TRANSPORTER ARSB-RELATED"/>
    <property type="match status" value="1"/>
</dbReference>
<dbReference type="Pfam" id="PF06450">
    <property type="entry name" value="NhaB"/>
    <property type="match status" value="1"/>
</dbReference>